<organism>
    <name type="scientific">Pasteurella multocida (strain Pm70)</name>
    <dbReference type="NCBI Taxonomy" id="272843"/>
    <lineage>
        <taxon>Bacteria</taxon>
        <taxon>Pseudomonadati</taxon>
        <taxon>Pseudomonadota</taxon>
        <taxon>Gammaproteobacteria</taxon>
        <taxon>Pasteurellales</taxon>
        <taxon>Pasteurellaceae</taxon>
        <taxon>Pasteurella</taxon>
    </lineage>
</organism>
<name>MNME_PASMU</name>
<keyword id="KW-0963">Cytoplasm</keyword>
<keyword id="KW-0342">GTP-binding</keyword>
<keyword id="KW-0378">Hydrolase</keyword>
<keyword id="KW-0460">Magnesium</keyword>
<keyword id="KW-0479">Metal-binding</keyword>
<keyword id="KW-0547">Nucleotide-binding</keyword>
<keyword id="KW-0630">Potassium</keyword>
<keyword id="KW-1185">Reference proteome</keyword>
<keyword id="KW-0819">tRNA processing</keyword>
<evidence type="ECO:0000255" key="1">
    <source>
        <dbReference type="HAMAP-Rule" id="MF_00379"/>
    </source>
</evidence>
<evidence type="ECO:0000305" key="2"/>
<dbReference type="EC" id="3.6.-.-" evidence="1"/>
<dbReference type="EMBL" id="AE004439">
    <property type="protein sequence ID" value="AAK03250.1"/>
    <property type="status" value="ALT_INIT"/>
    <property type="molecule type" value="Genomic_DNA"/>
</dbReference>
<dbReference type="RefSeq" id="WP_016533681.1">
    <property type="nucleotide sequence ID" value="NC_002663.1"/>
</dbReference>
<dbReference type="SMR" id="Q9CLQ1"/>
<dbReference type="STRING" id="272843.PM1166"/>
<dbReference type="EnsemblBacteria" id="AAK03250">
    <property type="protein sequence ID" value="AAK03250"/>
    <property type="gene ID" value="PM1166"/>
</dbReference>
<dbReference type="KEGG" id="pmu:PM1166"/>
<dbReference type="PATRIC" id="fig|272843.6.peg.1177"/>
<dbReference type="HOGENOM" id="CLU_019624_4_1_6"/>
<dbReference type="OrthoDB" id="9805918at2"/>
<dbReference type="Proteomes" id="UP000000809">
    <property type="component" value="Chromosome"/>
</dbReference>
<dbReference type="GO" id="GO:0005829">
    <property type="term" value="C:cytosol"/>
    <property type="evidence" value="ECO:0007669"/>
    <property type="project" value="TreeGrafter"/>
</dbReference>
<dbReference type="GO" id="GO:0005525">
    <property type="term" value="F:GTP binding"/>
    <property type="evidence" value="ECO:0007669"/>
    <property type="project" value="UniProtKB-UniRule"/>
</dbReference>
<dbReference type="GO" id="GO:0003924">
    <property type="term" value="F:GTPase activity"/>
    <property type="evidence" value="ECO:0007669"/>
    <property type="project" value="UniProtKB-UniRule"/>
</dbReference>
<dbReference type="GO" id="GO:0046872">
    <property type="term" value="F:metal ion binding"/>
    <property type="evidence" value="ECO:0007669"/>
    <property type="project" value="UniProtKB-KW"/>
</dbReference>
<dbReference type="GO" id="GO:0030488">
    <property type="term" value="P:tRNA methylation"/>
    <property type="evidence" value="ECO:0007669"/>
    <property type="project" value="TreeGrafter"/>
</dbReference>
<dbReference type="GO" id="GO:0002098">
    <property type="term" value="P:tRNA wobble uridine modification"/>
    <property type="evidence" value="ECO:0007669"/>
    <property type="project" value="TreeGrafter"/>
</dbReference>
<dbReference type="CDD" id="cd04164">
    <property type="entry name" value="trmE"/>
    <property type="match status" value="1"/>
</dbReference>
<dbReference type="CDD" id="cd14858">
    <property type="entry name" value="TrmE_N"/>
    <property type="match status" value="1"/>
</dbReference>
<dbReference type="FunFam" id="3.30.1360.120:FF:000001">
    <property type="entry name" value="tRNA modification GTPase MnmE"/>
    <property type="match status" value="1"/>
</dbReference>
<dbReference type="FunFam" id="3.40.50.300:FF:000249">
    <property type="entry name" value="tRNA modification GTPase MnmE"/>
    <property type="match status" value="1"/>
</dbReference>
<dbReference type="Gene3D" id="3.40.50.300">
    <property type="entry name" value="P-loop containing nucleotide triphosphate hydrolases"/>
    <property type="match status" value="1"/>
</dbReference>
<dbReference type="Gene3D" id="3.30.1360.120">
    <property type="entry name" value="Probable tRNA modification gtpase trme, domain 1"/>
    <property type="match status" value="1"/>
</dbReference>
<dbReference type="Gene3D" id="1.20.120.430">
    <property type="entry name" value="tRNA modification GTPase MnmE domain 2"/>
    <property type="match status" value="1"/>
</dbReference>
<dbReference type="HAMAP" id="MF_00379">
    <property type="entry name" value="GTPase_MnmE"/>
    <property type="match status" value="1"/>
</dbReference>
<dbReference type="InterPro" id="IPR031168">
    <property type="entry name" value="G_TrmE"/>
</dbReference>
<dbReference type="InterPro" id="IPR006073">
    <property type="entry name" value="GTP-bd"/>
</dbReference>
<dbReference type="InterPro" id="IPR018948">
    <property type="entry name" value="GTP-bd_TrmE_N"/>
</dbReference>
<dbReference type="InterPro" id="IPR004520">
    <property type="entry name" value="GTPase_MnmE"/>
</dbReference>
<dbReference type="InterPro" id="IPR027368">
    <property type="entry name" value="MnmE_dom2"/>
</dbReference>
<dbReference type="InterPro" id="IPR025867">
    <property type="entry name" value="MnmE_helical"/>
</dbReference>
<dbReference type="InterPro" id="IPR027417">
    <property type="entry name" value="P-loop_NTPase"/>
</dbReference>
<dbReference type="InterPro" id="IPR005225">
    <property type="entry name" value="Small_GTP-bd"/>
</dbReference>
<dbReference type="InterPro" id="IPR027266">
    <property type="entry name" value="TrmE/GcvT_dom1"/>
</dbReference>
<dbReference type="NCBIfam" id="TIGR00450">
    <property type="entry name" value="mnmE_trmE_thdF"/>
    <property type="match status" value="1"/>
</dbReference>
<dbReference type="NCBIfam" id="NF003661">
    <property type="entry name" value="PRK05291.1-3"/>
    <property type="match status" value="1"/>
</dbReference>
<dbReference type="NCBIfam" id="TIGR00231">
    <property type="entry name" value="small_GTP"/>
    <property type="match status" value="1"/>
</dbReference>
<dbReference type="PANTHER" id="PTHR42714">
    <property type="entry name" value="TRNA MODIFICATION GTPASE GTPBP3"/>
    <property type="match status" value="1"/>
</dbReference>
<dbReference type="PANTHER" id="PTHR42714:SF2">
    <property type="entry name" value="TRNA MODIFICATION GTPASE GTPBP3, MITOCHONDRIAL"/>
    <property type="match status" value="1"/>
</dbReference>
<dbReference type="Pfam" id="PF01926">
    <property type="entry name" value="MMR_HSR1"/>
    <property type="match status" value="1"/>
</dbReference>
<dbReference type="Pfam" id="PF12631">
    <property type="entry name" value="MnmE_helical"/>
    <property type="match status" value="1"/>
</dbReference>
<dbReference type="Pfam" id="PF10396">
    <property type="entry name" value="TrmE_N"/>
    <property type="match status" value="1"/>
</dbReference>
<dbReference type="PRINTS" id="PR00449">
    <property type="entry name" value="RASTRNSFRMNG"/>
</dbReference>
<dbReference type="SUPFAM" id="SSF52540">
    <property type="entry name" value="P-loop containing nucleoside triphosphate hydrolases"/>
    <property type="match status" value="1"/>
</dbReference>
<dbReference type="SUPFAM" id="SSF116878">
    <property type="entry name" value="TrmE connector domain"/>
    <property type="match status" value="1"/>
</dbReference>
<dbReference type="PROSITE" id="PS51709">
    <property type="entry name" value="G_TRME"/>
    <property type="match status" value="1"/>
</dbReference>
<proteinExistence type="inferred from homology"/>
<sequence>MKETIVAQATAPGRGGIGILRVSGPKAVEVAHTVLGKCPKPRMADYLPFKDSDGNVLDQGIALYFKAPHSFTGEDVLELQGHGGQVVLDLLLKRILQLEGLRLARPGEFSEQAFLNDKLDLAQAEAIADLIDASSEQAARSALKSLQGEFSNKVNQLVDSVIYLRTYVEAAIDFPDEEIDFLADGKIEAHLNDIITQLDHVRSEAKQGSILREGMKVVIAGRPNAGKSSLLNALAGREAAIVTDIAGTTRDVLREHIHIDGMPLHIIDTAGLREATDEVERIGIVRAWSEIEQADRILLMLDSTEADNQDLEKVRSEFLTKLPSNIPVTIVRNKADLSGENEGIVEQNGYTVITLSAKTQQGIALLREHLKQSMGYQTNMEGGFLARRRHLEALEQAATHLQQGHVQLTQFYAGELLAEELRRVQNHLSEITGQFTSDDLLGNIFSSFCIGK</sequence>
<gene>
    <name evidence="1" type="primary">mnmE</name>
    <name evidence="1" type="synonym">thdF</name>
    <name evidence="1" type="synonym">trmE</name>
    <name type="ordered locus">PM1166</name>
</gene>
<comment type="function">
    <text evidence="1">Exhibits a very high intrinsic GTPase hydrolysis rate. Involved in the addition of a carboxymethylaminomethyl (cmnm) group at the wobble position (U34) of certain tRNAs, forming tRNA-cmnm(5)s(2)U34.</text>
</comment>
<comment type="cofactor">
    <cofactor evidence="1">
        <name>K(+)</name>
        <dbReference type="ChEBI" id="CHEBI:29103"/>
    </cofactor>
    <text evidence="1">Binds 1 potassium ion per subunit.</text>
</comment>
<comment type="subunit">
    <text evidence="1">Homodimer. Heterotetramer of two MnmE and two MnmG subunits.</text>
</comment>
<comment type="subcellular location">
    <subcellularLocation>
        <location evidence="1">Cytoplasm</location>
    </subcellularLocation>
</comment>
<comment type="similarity">
    <text evidence="1">Belongs to the TRAFAC class TrmE-Era-EngA-EngB-Septin-like GTPase superfamily. TrmE GTPase family.</text>
</comment>
<comment type="sequence caution" evidence="2">
    <conflict type="erroneous initiation">
        <sequence resource="EMBL-CDS" id="AAK03250"/>
    </conflict>
</comment>
<reference key="1">
    <citation type="journal article" date="2001" name="Proc. Natl. Acad. Sci. U.S.A.">
        <title>Complete genomic sequence of Pasteurella multocida Pm70.</title>
        <authorList>
            <person name="May B.J."/>
            <person name="Zhang Q."/>
            <person name="Li L.L."/>
            <person name="Paustian M.L."/>
            <person name="Whittam T.S."/>
            <person name="Kapur V."/>
        </authorList>
    </citation>
    <scope>NUCLEOTIDE SEQUENCE [LARGE SCALE GENOMIC DNA]</scope>
    <source>
        <strain>Pm70</strain>
    </source>
</reference>
<feature type="chain" id="PRO_0000188898" description="tRNA modification GTPase MnmE">
    <location>
        <begin position="1"/>
        <end position="452"/>
    </location>
</feature>
<feature type="domain" description="TrmE-type G">
    <location>
        <begin position="214"/>
        <end position="375"/>
    </location>
</feature>
<feature type="binding site" evidence="1">
    <location>
        <position position="21"/>
    </location>
    <ligand>
        <name>(6S)-5-formyl-5,6,7,8-tetrahydrofolate</name>
        <dbReference type="ChEBI" id="CHEBI:57457"/>
    </ligand>
</feature>
<feature type="binding site" evidence="1">
    <location>
        <position position="78"/>
    </location>
    <ligand>
        <name>(6S)-5-formyl-5,6,7,8-tetrahydrofolate</name>
        <dbReference type="ChEBI" id="CHEBI:57457"/>
    </ligand>
</feature>
<feature type="binding site" evidence="1">
    <location>
        <position position="118"/>
    </location>
    <ligand>
        <name>(6S)-5-formyl-5,6,7,8-tetrahydrofolate</name>
        <dbReference type="ChEBI" id="CHEBI:57457"/>
    </ligand>
</feature>
<feature type="binding site" evidence="1">
    <location>
        <begin position="224"/>
        <end position="229"/>
    </location>
    <ligand>
        <name>GTP</name>
        <dbReference type="ChEBI" id="CHEBI:37565"/>
    </ligand>
</feature>
<feature type="binding site" evidence="1">
    <location>
        <position position="224"/>
    </location>
    <ligand>
        <name>K(+)</name>
        <dbReference type="ChEBI" id="CHEBI:29103"/>
    </ligand>
</feature>
<feature type="binding site" evidence="1">
    <location>
        <position position="228"/>
    </location>
    <ligand>
        <name>Mg(2+)</name>
        <dbReference type="ChEBI" id="CHEBI:18420"/>
    </ligand>
</feature>
<feature type="binding site" evidence="1">
    <location>
        <begin position="243"/>
        <end position="249"/>
    </location>
    <ligand>
        <name>GTP</name>
        <dbReference type="ChEBI" id="CHEBI:37565"/>
    </ligand>
</feature>
<feature type="binding site" evidence="1">
    <location>
        <position position="243"/>
    </location>
    <ligand>
        <name>K(+)</name>
        <dbReference type="ChEBI" id="CHEBI:29103"/>
    </ligand>
</feature>
<feature type="binding site" evidence="1">
    <location>
        <position position="245"/>
    </location>
    <ligand>
        <name>K(+)</name>
        <dbReference type="ChEBI" id="CHEBI:29103"/>
    </ligand>
</feature>
<feature type="binding site" evidence="1">
    <location>
        <position position="248"/>
    </location>
    <ligand>
        <name>K(+)</name>
        <dbReference type="ChEBI" id="CHEBI:29103"/>
    </ligand>
</feature>
<feature type="binding site" evidence="1">
    <location>
        <position position="249"/>
    </location>
    <ligand>
        <name>Mg(2+)</name>
        <dbReference type="ChEBI" id="CHEBI:18420"/>
    </ligand>
</feature>
<feature type="binding site" evidence="1">
    <location>
        <begin position="268"/>
        <end position="271"/>
    </location>
    <ligand>
        <name>GTP</name>
        <dbReference type="ChEBI" id="CHEBI:37565"/>
    </ligand>
</feature>
<feature type="binding site" evidence="1">
    <location>
        <begin position="333"/>
        <end position="336"/>
    </location>
    <ligand>
        <name>GTP</name>
        <dbReference type="ChEBI" id="CHEBI:37565"/>
    </ligand>
</feature>
<feature type="binding site" evidence="1">
    <location>
        <position position="452"/>
    </location>
    <ligand>
        <name>(6S)-5-formyl-5,6,7,8-tetrahydrofolate</name>
        <dbReference type="ChEBI" id="CHEBI:57457"/>
    </ligand>
</feature>
<accession>Q9CLQ1</accession>
<protein>
    <recommendedName>
        <fullName evidence="1">tRNA modification GTPase MnmE</fullName>
        <ecNumber evidence="1">3.6.-.-</ecNumber>
    </recommendedName>
</protein>